<keyword id="KW-0012">Acyltransferase</keyword>
<keyword id="KW-0963">Cytoplasm</keyword>
<keyword id="KW-0808">Transferase</keyword>
<proteinExistence type="inferred from homology"/>
<evidence type="ECO:0000255" key="1">
    <source>
        <dbReference type="HAMAP-Rule" id="MF_00013"/>
    </source>
</evidence>
<evidence type="ECO:0000255" key="2">
    <source>
        <dbReference type="PROSITE-ProRule" id="PRU01067"/>
    </source>
</evidence>
<protein>
    <recommendedName>
        <fullName evidence="1">Octanoyltransferase</fullName>
        <ecNumber evidence="1">2.3.1.181</ecNumber>
    </recommendedName>
    <alternativeName>
        <fullName evidence="1">Lipoate-protein ligase B</fullName>
    </alternativeName>
    <alternativeName>
        <fullName evidence="1">Lipoyl/octanoyl transferase</fullName>
    </alternativeName>
    <alternativeName>
        <fullName evidence="1">Octanoyl-[acyl-carrier-protein]-protein N-octanoyltransferase</fullName>
    </alternativeName>
</protein>
<accession>C6E0V3</accession>
<name>LIPB_GEOSM</name>
<organism>
    <name type="scientific">Geobacter sp. (strain M21)</name>
    <dbReference type="NCBI Taxonomy" id="443144"/>
    <lineage>
        <taxon>Bacteria</taxon>
        <taxon>Pseudomonadati</taxon>
        <taxon>Thermodesulfobacteriota</taxon>
        <taxon>Desulfuromonadia</taxon>
        <taxon>Geobacterales</taxon>
        <taxon>Geobacteraceae</taxon>
        <taxon>Geobacter</taxon>
    </lineage>
</organism>
<comment type="function">
    <text evidence="1">Catalyzes the transfer of endogenously produced octanoic acid from octanoyl-acyl-carrier-protein onto the lipoyl domains of lipoate-dependent enzymes. Lipoyl-ACP can also act as a substrate although octanoyl-ACP is likely to be the physiological substrate.</text>
</comment>
<comment type="catalytic activity">
    <reaction evidence="1">
        <text>octanoyl-[ACP] + L-lysyl-[protein] = N(6)-octanoyl-L-lysyl-[protein] + holo-[ACP] + H(+)</text>
        <dbReference type="Rhea" id="RHEA:17665"/>
        <dbReference type="Rhea" id="RHEA-COMP:9636"/>
        <dbReference type="Rhea" id="RHEA-COMP:9685"/>
        <dbReference type="Rhea" id="RHEA-COMP:9752"/>
        <dbReference type="Rhea" id="RHEA-COMP:9928"/>
        <dbReference type="ChEBI" id="CHEBI:15378"/>
        <dbReference type="ChEBI" id="CHEBI:29969"/>
        <dbReference type="ChEBI" id="CHEBI:64479"/>
        <dbReference type="ChEBI" id="CHEBI:78463"/>
        <dbReference type="ChEBI" id="CHEBI:78809"/>
        <dbReference type="EC" id="2.3.1.181"/>
    </reaction>
</comment>
<comment type="pathway">
    <text evidence="1">Protein modification; protein lipoylation via endogenous pathway; protein N(6)-(lipoyl)lysine from octanoyl-[acyl-carrier-protein]: step 1/2.</text>
</comment>
<comment type="subcellular location">
    <subcellularLocation>
        <location evidence="1">Cytoplasm</location>
    </subcellularLocation>
</comment>
<comment type="miscellaneous">
    <text evidence="1">In the reaction, the free carboxyl group of octanoic acid is attached via an amide linkage to the epsilon-amino group of a specific lysine residue of lipoyl domains of lipoate-dependent enzymes.</text>
</comment>
<comment type="similarity">
    <text evidence="1">Belongs to the LipB family.</text>
</comment>
<sequence>MICKDVGVIGYAEALRIQEQLVAKVQQGGEEALLLLEHLPVYTIGAGGSRDNVLDPELEPVRVNRGGDVTYHGPGQLVCYPILDLSRRGRDLHRYLRFLERFLVELCAGLGVACHTVPGRTGVWTGNGKLASIGVGVRRWVSMHGFALNVSPDTAPFSRINPCGMPDCRITSLSLELGEELFVDDLKETVAIRFQPFLHLHLPR</sequence>
<gene>
    <name evidence="1" type="primary">lipB</name>
    <name type="ordered locus">GM21_0719</name>
</gene>
<reference key="1">
    <citation type="submission" date="2009-07" db="EMBL/GenBank/DDBJ databases">
        <title>Complete sequence of Geobacter sp. M21.</title>
        <authorList>
            <consortium name="US DOE Joint Genome Institute"/>
            <person name="Lucas S."/>
            <person name="Copeland A."/>
            <person name="Lapidus A."/>
            <person name="Glavina del Rio T."/>
            <person name="Dalin E."/>
            <person name="Tice H."/>
            <person name="Bruce D."/>
            <person name="Goodwin L."/>
            <person name="Pitluck S."/>
            <person name="Saunders E."/>
            <person name="Brettin T."/>
            <person name="Detter J.C."/>
            <person name="Han C."/>
            <person name="Larimer F."/>
            <person name="Land M."/>
            <person name="Hauser L."/>
            <person name="Kyrpides N."/>
            <person name="Ovchinnikova G."/>
            <person name="Lovley D."/>
        </authorList>
    </citation>
    <scope>NUCLEOTIDE SEQUENCE [LARGE SCALE GENOMIC DNA]</scope>
    <source>
        <strain>M21</strain>
    </source>
</reference>
<feature type="chain" id="PRO_1000201796" description="Octanoyltransferase">
    <location>
        <begin position="1"/>
        <end position="204"/>
    </location>
</feature>
<feature type="domain" description="BPL/LPL catalytic" evidence="2">
    <location>
        <begin position="27"/>
        <end position="202"/>
    </location>
</feature>
<feature type="active site" description="Acyl-thioester intermediate" evidence="1">
    <location>
        <position position="163"/>
    </location>
</feature>
<feature type="binding site" evidence="1">
    <location>
        <begin position="65"/>
        <end position="72"/>
    </location>
    <ligand>
        <name>substrate</name>
    </ligand>
</feature>
<feature type="binding site" evidence="1">
    <location>
        <begin position="132"/>
        <end position="134"/>
    </location>
    <ligand>
        <name>substrate</name>
    </ligand>
</feature>
<feature type="binding site" evidence="1">
    <location>
        <begin position="145"/>
        <end position="147"/>
    </location>
    <ligand>
        <name>substrate</name>
    </ligand>
</feature>
<feature type="site" description="Lowers pKa of active site Cys" evidence="1">
    <location>
        <position position="129"/>
    </location>
</feature>
<dbReference type="EC" id="2.3.1.181" evidence="1"/>
<dbReference type="EMBL" id="CP001661">
    <property type="protein sequence ID" value="ACT16793.1"/>
    <property type="molecule type" value="Genomic_DNA"/>
</dbReference>
<dbReference type="SMR" id="C6E0V3"/>
<dbReference type="STRING" id="443144.GM21_0719"/>
<dbReference type="KEGG" id="gem:GM21_0719"/>
<dbReference type="eggNOG" id="COG0321">
    <property type="taxonomic scope" value="Bacteria"/>
</dbReference>
<dbReference type="HOGENOM" id="CLU_035168_1_3_7"/>
<dbReference type="OrthoDB" id="9787061at2"/>
<dbReference type="UniPathway" id="UPA00538">
    <property type="reaction ID" value="UER00592"/>
</dbReference>
<dbReference type="GO" id="GO:0005737">
    <property type="term" value="C:cytoplasm"/>
    <property type="evidence" value="ECO:0007669"/>
    <property type="project" value="UniProtKB-SubCell"/>
</dbReference>
<dbReference type="GO" id="GO:0033819">
    <property type="term" value="F:lipoyl(octanoyl) transferase activity"/>
    <property type="evidence" value="ECO:0007669"/>
    <property type="project" value="UniProtKB-EC"/>
</dbReference>
<dbReference type="GO" id="GO:0036211">
    <property type="term" value="P:protein modification process"/>
    <property type="evidence" value="ECO:0007669"/>
    <property type="project" value="InterPro"/>
</dbReference>
<dbReference type="CDD" id="cd16444">
    <property type="entry name" value="LipB"/>
    <property type="match status" value="1"/>
</dbReference>
<dbReference type="Gene3D" id="3.30.930.10">
    <property type="entry name" value="Bira Bifunctional Protein, Domain 2"/>
    <property type="match status" value="1"/>
</dbReference>
<dbReference type="HAMAP" id="MF_00013">
    <property type="entry name" value="LipB"/>
    <property type="match status" value="1"/>
</dbReference>
<dbReference type="InterPro" id="IPR045864">
    <property type="entry name" value="aa-tRNA-synth_II/BPL/LPL"/>
</dbReference>
<dbReference type="InterPro" id="IPR004143">
    <property type="entry name" value="BPL_LPL_catalytic"/>
</dbReference>
<dbReference type="InterPro" id="IPR000544">
    <property type="entry name" value="Octanoyltransferase"/>
</dbReference>
<dbReference type="InterPro" id="IPR020605">
    <property type="entry name" value="Octanoyltransferase_CS"/>
</dbReference>
<dbReference type="NCBIfam" id="TIGR00214">
    <property type="entry name" value="lipB"/>
    <property type="match status" value="1"/>
</dbReference>
<dbReference type="NCBIfam" id="NF010925">
    <property type="entry name" value="PRK14345.1"/>
    <property type="match status" value="1"/>
</dbReference>
<dbReference type="PANTHER" id="PTHR10993:SF7">
    <property type="entry name" value="LIPOYLTRANSFERASE 2, MITOCHONDRIAL-RELATED"/>
    <property type="match status" value="1"/>
</dbReference>
<dbReference type="PANTHER" id="PTHR10993">
    <property type="entry name" value="OCTANOYLTRANSFERASE"/>
    <property type="match status" value="1"/>
</dbReference>
<dbReference type="Pfam" id="PF21948">
    <property type="entry name" value="LplA-B_cat"/>
    <property type="match status" value="1"/>
</dbReference>
<dbReference type="PIRSF" id="PIRSF016262">
    <property type="entry name" value="LPLase"/>
    <property type="match status" value="1"/>
</dbReference>
<dbReference type="SUPFAM" id="SSF55681">
    <property type="entry name" value="Class II aaRS and biotin synthetases"/>
    <property type="match status" value="1"/>
</dbReference>
<dbReference type="PROSITE" id="PS51733">
    <property type="entry name" value="BPL_LPL_CATALYTIC"/>
    <property type="match status" value="1"/>
</dbReference>
<dbReference type="PROSITE" id="PS01313">
    <property type="entry name" value="LIPB"/>
    <property type="match status" value="1"/>
</dbReference>